<organism>
    <name type="scientific">Campylobacter jejuni subsp. jejuni serotype O:23/36 (strain 81-176)</name>
    <dbReference type="NCBI Taxonomy" id="354242"/>
    <lineage>
        <taxon>Bacteria</taxon>
        <taxon>Pseudomonadati</taxon>
        <taxon>Campylobacterota</taxon>
        <taxon>Epsilonproteobacteria</taxon>
        <taxon>Campylobacterales</taxon>
        <taxon>Campylobacteraceae</taxon>
        <taxon>Campylobacter</taxon>
    </lineage>
</organism>
<gene>
    <name evidence="1" type="primary">dapB</name>
    <name type="ordered locus">CJJ81176_0228</name>
</gene>
<accession>A1VXS5</accession>
<keyword id="KW-0028">Amino-acid biosynthesis</keyword>
<keyword id="KW-0963">Cytoplasm</keyword>
<keyword id="KW-0220">Diaminopimelate biosynthesis</keyword>
<keyword id="KW-0457">Lysine biosynthesis</keyword>
<keyword id="KW-0520">NAD</keyword>
<keyword id="KW-0521">NADP</keyword>
<keyword id="KW-0560">Oxidoreductase</keyword>
<feature type="chain" id="PRO_1000008554" description="4-hydroxy-tetrahydrodipicolinate reductase">
    <location>
        <begin position="1"/>
        <end position="242"/>
    </location>
</feature>
<feature type="active site" description="Proton donor/acceptor" evidence="1">
    <location>
        <position position="131"/>
    </location>
</feature>
<feature type="active site" description="Proton donor" evidence="1">
    <location>
        <position position="135"/>
    </location>
</feature>
<feature type="binding site" evidence="1">
    <location>
        <begin position="8"/>
        <end position="13"/>
    </location>
    <ligand>
        <name>NAD(+)</name>
        <dbReference type="ChEBI" id="CHEBI:57540"/>
    </ligand>
</feature>
<feature type="binding site" evidence="1">
    <location>
        <begin position="75"/>
        <end position="77"/>
    </location>
    <ligand>
        <name>NAD(+)</name>
        <dbReference type="ChEBI" id="CHEBI:57540"/>
    </ligand>
</feature>
<feature type="binding site" evidence="1">
    <location>
        <begin position="99"/>
        <end position="102"/>
    </location>
    <ligand>
        <name>NAD(+)</name>
        <dbReference type="ChEBI" id="CHEBI:57540"/>
    </ligand>
</feature>
<feature type="binding site" evidence="1">
    <location>
        <position position="132"/>
    </location>
    <ligand>
        <name>(S)-2,3,4,5-tetrahydrodipicolinate</name>
        <dbReference type="ChEBI" id="CHEBI:16845"/>
    </ligand>
</feature>
<feature type="binding site" evidence="1">
    <location>
        <begin position="141"/>
        <end position="142"/>
    </location>
    <ligand>
        <name>(S)-2,3,4,5-tetrahydrodipicolinate</name>
        <dbReference type="ChEBI" id="CHEBI:16845"/>
    </ligand>
</feature>
<name>DAPB_CAMJJ</name>
<comment type="function">
    <text evidence="1">Catalyzes the conversion of 4-hydroxy-tetrahydrodipicolinate (HTPA) to tetrahydrodipicolinate.</text>
</comment>
<comment type="catalytic activity">
    <reaction evidence="1">
        <text>(S)-2,3,4,5-tetrahydrodipicolinate + NAD(+) + H2O = (2S,4S)-4-hydroxy-2,3,4,5-tetrahydrodipicolinate + NADH + H(+)</text>
        <dbReference type="Rhea" id="RHEA:35323"/>
        <dbReference type="ChEBI" id="CHEBI:15377"/>
        <dbReference type="ChEBI" id="CHEBI:15378"/>
        <dbReference type="ChEBI" id="CHEBI:16845"/>
        <dbReference type="ChEBI" id="CHEBI:57540"/>
        <dbReference type="ChEBI" id="CHEBI:57945"/>
        <dbReference type="ChEBI" id="CHEBI:67139"/>
        <dbReference type="EC" id="1.17.1.8"/>
    </reaction>
</comment>
<comment type="catalytic activity">
    <reaction evidence="1">
        <text>(S)-2,3,4,5-tetrahydrodipicolinate + NADP(+) + H2O = (2S,4S)-4-hydroxy-2,3,4,5-tetrahydrodipicolinate + NADPH + H(+)</text>
        <dbReference type="Rhea" id="RHEA:35331"/>
        <dbReference type="ChEBI" id="CHEBI:15377"/>
        <dbReference type="ChEBI" id="CHEBI:15378"/>
        <dbReference type="ChEBI" id="CHEBI:16845"/>
        <dbReference type="ChEBI" id="CHEBI:57783"/>
        <dbReference type="ChEBI" id="CHEBI:58349"/>
        <dbReference type="ChEBI" id="CHEBI:67139"/>
        <dbReference type="EC" id="1.17.1.8"/>
    </reaction>
</comment>
<comment type="pathway">
    <text evidence="1">Amino-acid biosynthesis; L-lysine biosynthesis via DAP pathway; (S)-tetrahydrodipicolinate from L-aspartate: step 4/4.</text>
</comment>
<comment type="subcellular location">
    <subcellularLocation>
        <location evidence="1">Cytoplasm</location>
    </subcellularLocation>
</comment>
<comment type="similarity">
    <text evidence="1">Belongs to the DapB family.</text>
</comment>
<comment type="caution">
    <text evidence="2">Was originally thought to be a dihydrodipicolinate reductase (DHDPR), catalyzing the conversion of dihydrodipicolinate to tetrahydrodipicolinate. However, it was shown in E.coli that the substrate of the enzymatic reaction is not dihydrodipicolinate (DHDP) but in fact (2S,4S)-4-hydroxy-2,3,4,5-tetrahydrodipicolinic acid (HTPA), the product released by the DapA-catalyzed reaction.</text>
</comment>
<reference key="1">
    <citation type="submission" date="2006-12" db="EMBL/GenBank/DDBJ databases">
        <authorList>
            <person name="Fouts D.E."/>
            <person name="Nelson K.E."/>
            <person name="Sebastian Y."/>
        </authorList>
    </citation>
    <scope>NUCLEOTIDE SEQUENCE [LARGE SCALE GENOMIC DNA]</scope>
    <source>
        <strain>81-176</strain>
    </source>
</reference>
<proteinExistence type="inferred from homology"/>
<evidence type="ECO:0000255" key="1">
    <source>
        <dbReference type="HAMAP-Rule" id="MF_00102"/>
    </source>
</evidence>
<evidence type="ECO:0000305" key="2"/>
<sequence length="242" mass="26696">MIKIGIYGAKGRMGKQIEECLKSETQARISILYDKGGNLGELFEKSDVIIDFSSPSGTHELLNYARTMPKPLVIGTTGLDEKILHLMQSASEVMPIFYATNMSLGVAVLNYLASKASQMLRNFDIEILEMHHRHKKDAPSGTAMTLAQSVAKARNLELEKVRVSGRDGIIGERSKDEIAVMSLRGGDIVGRHTVGFYEDGEFLELNHTATSRATFAKGAIKIAIWLSKQEAKMYSINDFLGI</sequence>
<protein>
    <recommendedName>
        <fullName evidence="1">4-hydroxy-tetrahydrodipicolinate reductase</fullName>
        <shortName evidence="1">HTPA reductase</shortName>
        <ecNumber evidence="1">1.17.1.8</ecNumber>
    </recommendedName>
</protein>
<dbReference type="EC" id="1.17.1.8" evidence="1"/>
<dbReference type="EMBL" id="CP000538">
    <property type="protein sequence ID" value="EAQ72960.1"/>
    <property type="molecule type" value="Genomic_DNA"/>
</dbReference>
<dbReference type="RefSeq" id="WP_002851754.1">
    <property type="nucleotide sequence ID" value="NC_008787.1"/>
</dbReference>
<dbReference type="SMR" id="A1VXS5"/>
<dbReference type="KEGG" id="cjj:CJJ81176_0228"/>
<dbReference type="eggNOG" id="COG0289">
    <property type="taxonomic scope" value="Bacteria"/>
</dbReference>
<dbReference type="HOGENOM" id="CLU_047479_2_2_7"/>
<dbReference type="UniPathway" id="UPA00034">
    <property type="reaction ID" value="UER00018"/>
</dbReference>
<dbReference type="Proteomes" id="UP000000646">
    <property type="component" value="Chromosome"/>
</dbReference>
<dbReference type="GO" id="GO:0005829">
    <property type="term" value="C:cytosol"/>
    <property type="evidence" value="ECO:0007669"/>
    <property type="project" value="TreeGrafter"/>
</dbReference>
<dbReference type="GO" id="GO:0008839">
    <property type="term" value="F:4-hydroxy-tetrahydrodipicolinate reductase"/>
    <property type="evidence" value="ECO:0007669"/>
    <property type="project" value="UniProtKB-EC"/>
</dbReference>
<dbReference type="GO" id="GO:0051287">
    <property type="term" value="F:NAD binding"/>
    <property type="evidence" value="ECO:0007669"/>
    <property type="project" value="UniProtKB-UniRule"/>
</dbReference>
<dbReference type="GO" id="GO:0050661">
    <property type="term" value="F:NADP binding"/>
    <property type="evidence" value="ECO:0007669"/>
    <property type="project" value="UniProtKB-UniRule"/>
</dbReference>
<dbReference type="GO" id="GO:0016726">
    <property type="term" value="F:oxidoreductase activity, acting on CH or CH2 groups, NAD or NADP as acceptor"/>
    <property type="evidence" value="ECO:0007669"/>
    <property type="project" value="UniProtKB-UniRule"/>
</dbReference>
<dbReference type="GO" id="GO:0019877">
    <property type="term" value="P:diaminopimelate biosynthetic process"/>
    <property type="evidence" value="ECO:0007669"/>
    <property type="project" value="UniProtKB-UniRule"/>
</dbReference>
<dbReference type="GO" id="GO:0009089">
    <property type="term" value="P:lysine biosynthetic process via diaminopimelate"/>
    <property type="evidence" value="ECO:0007669"/>
    <property type="project" value="UniProtKB-UniRule"/>
</dbReference>
<dbReference type="CDD" id="cd02274">
    <property type="entry name" value="DHDPR_N"/>
    <property type="match status" value="1"/>
</dbReference>
<dbReference type="FunFam" id="3.30.360.10:FF:000004">
    <property type="entry name" value="4-hydroxy-tetrahydrodipicolinate reductase"/>
    <property type="match status" value="1"/>
</dbReference>
<dbReference type="Gene3D" id="3.30.360.10">
    <property type="entry name" value="Dihydrodipicolinate Reductase, domain 2"/>
    <property type="match status" value="1"/>
</dbReference>
<dbReference type="Gene3D" id="3.40.50.720">
    <property type="entry name" value="NAD(P)-binding Rossmann-like Domain"/>
    <property type="match status" value="1"/>
</dbReference>
<dbReference type="HAMAP" id="MF_00102">
    <property type="entry name" value="DapB"/>
    <property type="match status" value="1"/>
</dbReference>
<dbReference type="InterPro" id="IPR022663">
    <property type="entry name" value="DapB_C"/>
</dbReference>
<dbReference type="InterPro" id="IPR000846">
    <property type="entry name" value="DapB_N"/>
</dbReference>
<dbReference type="InterPro" id="IPR022664">
    <property type="entry name" value="DapB_N_CS"/>
</dbReference>
<dbReference type="InterPro" id="IPR023940">
    <property type="entry name" value="DHDPR_bac"/>
</dbReference>
<dbReference type="InterPro" id="IPR036291">
    <property type="entry name" value="NAD(P)-bd_dom_sf"/>
</dbReference>
<dbReference type="NCBIfam" id="TIGR00036">
    <property type="entry name" value="dapB"/>
    <property type="match status" value="1"/>
</dbReference>
<dbReference type="PANTHER" id="PTHR20836:SF0">
    <property type="entry name" value="4-HYDROXY-TETRAHYDRODIPICOLINATE REDUCTASE 1, CHLOROPLASTIC-RELATED"/>
    <property type="match status" value="1"/>
</dbReference>
<dbReference type="PANTHER" id="PTHR20836">
    <property type="entry name" value="DIHYDRODIPICOLINATE REDUCTASE"/>
    <property type="match status" value="1"/>
</dbReference>
<dbReference type="Pfam" id="PF05173">
    <property type="entry name" value="DapB_C"/>
    <property type="match status" value="1"/>
</dbReference>
<dbReference type="Pfam" id="PF01113">
    <property type="entry name" value="DapB_N"/>
    <property type="match status" value="1"/>
</dbReference>
<dbReference type="PIRSF" id="PIRSF000161">
    <property type="entry name" value="DHPR"/>
    <property type="match status" value="1"/>
</dbReference>
<dbReference type="SUPFAM" id="SSF55347">
    <property type="entry name" value="Glyceraldehyde-3-phosphate dehydrogenase-like, C-terminal domain"/>
    <property type="match status" value="1"/>
</dbReference>
<dbReference type="SUPFAM" id="SSF51735">
    <property type="entry name" value="NAD(P)-binding Rossmann-fold domains"/>
    <property type="match status" value="1"/>
</dbReference>
<dbReference type="PROSITE" id="PS01298">
    <property type="entry name" value="DAPB"/>
    <property type="match status" value="1"/>
</dbReference>